<reference key="1">
    <citation type="journal article" date="2009" name="BMC Genomics">
        <title>Pseudogene accumulation in the evolutionary histories of Salmonella enterica serovars Paratyphi A and Typhi.</title>
        <authorList>
            <person name="Holt K.E."/>
            <person name="Thomson N.R."/>
            <person name="Wain J."/>
            <person name="Langridge G.C."/>
            <person name="Hasan R."/>
            <person name="Bhutta Z.A."/>
            <person name="Quail M.A."/>
            <person name="Norbertczak H."/>
            <person name="Walker D."/>
            <person name="Simmonds M."/>
            <person name="White B."/>
            <person name="Bason N."/>
            <person name="Mungall K."/>
            <person name="Dougan G."/>
            <person name="Parkhill J."/>
        </authorList>
    </citation>
    <scope>NUCLEOTIDE SEQUENCE [LARGE SCALE GENOMIC DNA]</scope>
    <source>
        <strain>AKU_12601</strain>
    </source>
</reference>
<dbReference type="EMBL" id="FM200053">
    <property type="protein sequence ID" value="CAR58653.1"/>
    <property type="molecule type" value="Genomic_DNA"/>
</dbReference>
<dbReference type="RefSeq" id="WP_000538693.1">
    <property type="nucleotide sequence ID" value="NC_011147.1"/>
</dbReference>
<dbReference type="KEGG" id="sek:SSPA0524"/>
<dbReference type="HOGENOM" id="CLU_131462_1_0_6"/>
<dbReference type="UniPathway" id="UPA00030"/>
<dbReference type="Proteomes" id="UP000001869">
    <property type="component" value="Chromosome"/>
</dbReference>
<dbReference type="GO" id="GO:0005886">
    <property type="term" value="C:plasma membrane"/>
    <property type="evidence" value="ECO:0007669"/>
    <property type="project" value="UniProtKB-SubCell"/>
</dbReference>
<dbReference type="GO" id="GO:1901505">
    <property type="term" value="F:carbohydrate derivative transmembrane transporter activity"/>
    <property type="evidence" value="ECO:0007669"/>
    <property type="project" value="InterPro"/>
</dbReference>
<dbReference type="GO" id="GO:0009245">
    <property type="term" value="P:lipid A biosynthetic process"/>
    <property type="evidence" value="ECO:0007669"/>
    <property type="project" value="UniProtKB-UniRule"/>
</dbReference>
<dbReference type="GO" id="GO:0009103">
    <property type="term" value="P:lipopolysaccharide biosynthetic process"/>
    <property type="evidence" value="ECO:0007669"/>
    <property type="project" value="UniProtKB-UniRule"/>
</dbReference>
<dbReference type="Gene3D" id="1.10.3730.20">
    <property type="match status" value="1"/>
</dbReference>
<dbReference type="HAMAP" id="MF_00538">
    <property type="entry name" value="Flippase_ArnF"/>
    <property type="match status" value="1"/>
</dbReference>
<dbReference type="InterPro" id="IPR022832">
    <property type="entry name" value="Flippase_ArnF"/>
</dbReference>
<dbReference type="InterPro" id="IPR000390">
    <property type="entry name" value="Small_drug/metabolite_transptr"/>
</dbReference>
<dbReference type="NCBIfam" id="NF002816">
    <property type="entry name" value="PRK02971.1-2"/>
    <property type="match status" value="1"/>
</dbReference>
<dbReference type="PANTHER" id="PTHR30561:SF9">
    <property type="entry name" value="4-AMINO-4-DEOXY-L-ARABINOSE-PHOSPHOUNDECAPRENOL FLIPPASE SUBUNIT ARNF-RELATED"/>
    <property type="match status" value="1"/>
</dbReference>
<dbReference type="PANTHER" id="PTHR30561">
    <property type="entry name" value="SMR FAMILY PROTON-DEPENDENT DRUG EFFLUX TRANSPORTER SUGE"/>
    <property type="match status" value="1"/>
</dbReference>
<gene>
    <name evidence="1" type="primary">arnF</name>
    <name type="ordered locus">SSPA0524</name>
</gene>
<evidence type="ECO:0000255" key="1">
    <source>
        <dbReference type="HAMAP-Rule" id="MF_00538"/>
    </source>
</evidence>
<feature type="chain" id="PRO_1000128670" description="Probable 4-amino-4-deoxy-L-arabinose-phosphoundecaprenol flippase subunit ArnF">
    <location>
        <begin position="1"/>
        <end position="125"/>
    </location>
</feature>
<feature type="topological domain" description="Cytoplasmic" evidence="1">
    <location>
        <begin position="1"/>
        <end position="2"/>
    </location>
</feature>
<feature type="transmembrane region" description="Helical" evidence="1">
    <location>
        <begin position="3"/>
        <end position="23"/>
    </location>
</feature>
<feature type="topological domain" description="Periplasmic" evidence="1">
    <location>
        <begin position="24"/>
        <end position="33"/>
    </location>
</feature>
<feature type="transmembrane region" description="Helical" evidence="1">
    <location>
        <begin position="34"/>
        <end position="54"/>
    </location>
</feature>
<feature type="topological domain" description="Cytoplasmic" evidence="1">
    <location>
        <begin position="55"/>
        <end position="76"/>
    </location>
</feature>
<feature type="transmembrane region" description="Helical" evidence="1">
    <location>
        <begin position="77"/>
        <end position="97"/>
    </location>
</feature>
<feature type="topological domain" description="Periplasmic" evidence="1">
    <location>
        <begin position="98"/>
        <end position="100"/>
    </location>
</feature>
<feature type="transmembrane region" description="Helical" evidence="1">
    <location>
        <begin position="101"/>
        <end position="121"/>
    </location>
</feature>
<feature type="topological domain" description="Cytoplasmic" evidence="1">
    <location>
        <begin position="122"/>
        <end position="125"/>
    </location>
</feature>
<protein>
    <recommendedName>
        <fullName evidence="1">Probable 4-amino-4-deoxy-L-arabinose-phosphoundecaprenol flippase subunit ArnF</fullName>
        <shortName evidence="1">L-Ara4N-phosphoundecaprenol flippase subunit ArnF</shortName>
    </recommendedName>
    <alternativeName>
        <fullName evidence="1">Undecaprenyl phosphate-aminoarabinose flippase subunit ArnF</fullName>
    </alternativeName>
</protein>
<sequence length="125" mass="13151">MGVMWGLISVAIASLAQLSLGFAMMRLPSIAHPLAFISGLGAFNAATLALFAGLAGYLVSVFCWQKTLHMLALSKAYALLSLSYVLVWVASMLLPGLQGAFSLKAMLGVLCIMAGVMLIFLPARS</sequence>
<comment type="function">
    <text evidence="1">Translocates 4-amino-4-deoxy-L-arabinose-phosphoundecaprenol (alpha-L-Ara4N-phosphoundecaprenol) from the cytoplasmic to the periplasmic side of the inner membrane.</text>
</comment>
<comment type="pathway">
    <text evidence="1">Bacterial outer membrane biogenesis; lipopolysaccharide biosynthesis.</text>
</comment>
<comment type="subunit">
    <text evidence="1">Heterodimer of ArnE and ArnF.</text>
</comment>
<comment type="subcellular location">
    <subcellularLocation>
        <location evidence="1">Cell inner membrane</location>
        <topology evidence="1">Multi-pass membrane protein</topology>
    </subcellularLocation>
</comment>
<comment type="similarity">
    <text evidence="1">Belongs to the ArnF family.</text>
</comment>
<name>ARNF_SALPK</name>
<proteinExistence type="inferred from homology"/>
<organism>
    <name type="scientific">Salmonella paratyphi A (strain AKU_12601)</name>
    <dbReference type="NCBI Taxonomy" id="554290"/>
    <lineage>
        <taxon>Bacteria</taxon>
        <taxon>Pseudomonadati</taxon>
        <taxon>Pseudomonadota</taxon>
        <taxon>Gammaproteobacteria</taxon>
        <taxon>Enterobacterales</taxon>
        <taxon>Enterobacteriaceae</taxon>
        <taxon>Salmonella</taxon>
    </lineage>
</organism>
<accession>B5BCP2</accession>
<keyword id="KW-0997">Cell inner membrane</keyword>
<keyword id="KW-1003">Cell membrane</keyword>
<keyword id="KW-0441">Lipid A biosynthesis</keyword>
<keyword id="KW-0444">Lipid biosynthesis</keyword>
<keyword id="KW-0443">Lipid metabolism</keyword>
<keyword id="KW-0448">Lipopolysaccharide biosynthesis</keyword>
<keyword id="KW-0472">Membrane</keyword>
<keyword id="KW-0812">Transmembrane</keyword>
<keyword id="KW-1133">Transmembrane helix</keyword>
<keyword id="KW-0813">Transport</keyword>